<gene>
    <name evidence="1" type="primary">yobD</name>
    <name type="ordered locus">ECH74115_2549</name>
</gene>
<accession>B5YQW1</accession>
<feature type="chain" id="PRO_1000136636" description="UPF0266 membrane protein YobD">
    <location>
        <begin position="1"/>
        <end position="152"/>
    </location>
</feature>
<feature type="transmembrane region" description="Helical" evidence="1">
    <location>
        <begin position="6"/>
        <end position="26"/>
    </location>
</feature>
<feature type="transmembrane region" description="Helical" evidence="1">
    <location>
        <begin position="45"/>
        <end position="65"/>
    </location>
</feature>
<feature type="transmembrane region" description="Helical" evidence="1">
    <location>
        <begin position="67"/>
        <end position="87"/>
    </location>
</feature>
<sequence length="152" mass="17643">MTITDLVLILFIAALLAFAIYDQFIMPRRNGPTLLAIPLLRRGRIDSVIFVGLIVILIYNNVTNHGALITTWLLSALALMGFYIFWIRVPKIIFKQKGFFFANVWIEYSRIKAMNLSEDGVLVMQLEQRRLLIRVRNIDDLERIYKLLVSTQ</sequence>
<reference key="1">
    <citation type="journal article" date="2011" name="Proc. Natl. Acad. Sci. U.S.A.">
        <title>Genomic anatomy of Escherichia coli O157:H7 outbreaks.</title>
        <authorList>
            <person name="Eppinger M."/>
            <person name="Mammel M.K."/>
            <person name="Leclerc J.E."/>
            <person name="Ravel J."/>
            <person name="Cebula T.A."/>
        </authorList>
    </citation>
    <scope>NUCLEOTIDE SEQUENCE [LARGE SCALE GENOMIC DNA]</scope>
    <source>
        <strain>EC4115 / EHEC</strain>
    </source>
</reference>
<name>YOBD_ECO5E</name>
<keyword id="KW-0997">Cell inner membrane</keyword>
<keyword id="KW-1003">Cell membrane</keyword>
<keyword id="KW-0472">Membrane</keyword>
<keyword id="KW-0812">Transmembrane</keyword>
<keyword id="KW-1133">Transmembrane helix</keyword>
<proteinExistence type="inferred from homology"/>
<organism>
    <name type="scientific">Escherichia coli O157:H7 (strain EC4115 / EHEC)</name>
    <dbReference type="NCBI Taxonomy" id="444450"/>
    <lineage>
        <taxon>Bacteria</taxon>
        <taxon>Pseudomonadati</taxon>
        <taxon>Pseudomonadota</taxon>
        <taxon>Gammaproteobacteria</taxon>
        <taxon>Enterobacterales</taxon>
        <taxon>Enterobacteriaceae</taxon>
        <taxon>Escherichia</taxon>
    </lineage>
</organism>
<evidence type="ECO:0000255" key="1">
    <source>
        <dbReference type="HAMAP-Rule" id="MF_01071"/>
    </source>
</evidence>
<protein>
    <recommendedName>
        <fullName evidence="1">UPF0266 membrane protein YobD</fullName>
    </recommendedName>
</protein>
<dbReference type="EMBL" id="CP001164">
    <property type="protein sequence ID" value="ACI35415.1"/>
    <property type="molecule type" value="Genomic_DNA"/>
</dbReference>
<dbReference type="RefSeq" id="WP_000156258.1">
    <property type="nucleotide sequence ID" value="NC_011353.1"/>
</dbReference>
<dbReference type="KEGG" id="ecf:ECH74115_2549"/>
<dbReference type="HOGENOM" id="CLU_133645_0_0_6"/>
<dbReference type="GO" id="GO:0005886">
    <property type="term" value="C:plasma membrane"/>
    <property type="evidence" value="ECO:0007669"/>
    <property type="project" value="UniProtKB-SubCell"/>
</dbReference>
<dbReference type="HAMAP" id="MF_01071">
    <property type="entry name" value="UPF0266"/>
    <property type="match status" value="1"/>
</dbReference>
<dbReference type="InterPro" id="IPR009328">
    <property type="entry name" value="DUF986"/>
</dbReference>
<dbReference type="NCBIfam" id="NF002791">
    <property type="entry name" value="PRK02913.1"/>
    <property type="match status" value="1"/>
</dbReference>
<dbReference type="Pfam" id="PF06173">
    <property type="entry name" value="DUF986"/>
    <property type="match status" value="1"/>
</dbReference>
<dbReference type="PIRSF" id="PIRSF020687">
    <property type="entry name" value="UCP020687"/>
    <property type="match status" value="1"/>
</dbReference>
<comment type="subcellular location">
    <subcellularLocation>
        <location evidence="1">Cell inner membrane</location>
        <topology evidence="1">Multi-pass membrane protein</topology>
    </subcellularLocation>
</comment>
<comment type="similarity">
    <text evidence="1">Belongs to the UPF0266 family.</text>
</comment>